<name>RL2_XYLF2</name>
<proteinExistence type="inferred from homology"/>
<accession>B2I8H2</accession>
<gene>
    <name evidence="1" type="primary">rplB</name>
    <name type="ordered locus">XfasM23_0436</name>
</gene>
<reference key="1">
    <citation type="journal article" date="2010" name="J. Bacteriol.">
        <title>Whole genome sequences of two Xylella fastidiosa strains (M12 and M23) causing almond leaf scorch disease in California.</title>
        <authorList>
            <person name="Chen J."/>
            <person name="Xie G."/>
            <person name="Han S."/>
            <person name="Chertkov O."/>
            <person name="Sims D."/>
            <person name="Civerolo E.L."/>
        </authorList>
    </citation>
    <scope>NUCLEOTIDE SEQUENCE [LARGE SCALE GENOMIC DNA]</scope>
    <source>
        <strain>M23</strain>
    </source>
</reference>
<feature type="chain" id="PRO_1000141642" description="Large ribosomal subunit protein uL2">
    <location>
        <begin position="1"/>
        <end position="275"/>
    </location>
</feature>
<feature type="region of interest" description="Disordered" evidence="2">
    <location>
        <begin position="227"/>
        <end position="261"/>
    </location>
</feature>
<sequence>MPLIKFKPTSPGRRSAARVVTPNIHKGSPHAALLESQSKTGGRNHHGRITVRHIGGGCKQRYRVIDFKRDKEAIPARVERIEYDPNRTAHIALLCYIDGERCYIIAPKGLKEGDKIISGPNVPIKLGNSLPLRNIPVGTTVHAVELKPRKGAQMARSAGSSVQLVAREGVYATLRLRSGEMRRVLAECRATIGEVGNEEHNLRKLGKAGAKRWLGVRPTVRGAAMNPVDHPHGGGEAKSGQGNPHPVTPWGVPTKGYKTRKNKRTQQFIIRGRRG</sequence>
<evidence type="ECO:0000255" key="1">
    <source>
        <dbReference type="HAMAP-Rule" id="MF_01320"/>
    </source>
</evidence>
<evidence type="ECO:0000256" key="2">
    <source>
        <dbReference type="SAM" id="MobiDB-lite"/>
    </source>
</evidence>
<evidence type="ECO:0000305" key="3"/>
<protein>
    <recommendedName>
        <fullName evidence="1">Large ribosomal subunit protein uL2</fullName>
    </recommendedName>
    <alternativeName>
        <fullName evidence="3">50S ribosomal protein L2</fullName>
    </alternativeName>
</protein>
<keyword id="KW-0687">Ribonucleoprotein</keyword>
<keyword id="KW-0689">Ribosomal protein</keyword>
<keyword id="KW-0694">RNA-binding</keyword>
<keyword id="KW-0699">rRNA-binding</keyword>
<organism>
    <name type="scientific">Xylella fastidiosa (strain M23)</name>
    <dbReference type="NCBI Taxonomy" id="405441"/>
    <lineage>
        <taxon>Bacteria</taxon>
        <taxon>Pseudomonadati</taxon>
        <taxon>Pseudomonadota</taxon>
        <taxon>Gammaproteobacteria</taxon>
        <taxon>Lysobacterales</taxon>
        <taxon>Lysobacteraceae</taxon>
        <taxon>Xylella</taxon>
    </lineage>
</organism>
<comment type="function">
    <text evidence="1">One of the primary rRNA binding proteins. Required for association of the 30S and 50S subunits to form the 70S ribosome, for tRNA binding and peptide bond formation. It has been suggested to have peptidyltransferase activity; this is somewhat controversial. Makes several contacts with the 16S rRNA in the 70S ribosome.</text>
</comment>
<comment type="subunit">
    <text evidence="1">Part of the 50S ribosomal subunit. Forms a bridge to the 30S subunit in the 70S ribosome.</text>
</comment>
<comment type="similarity">
    <text evidence="1">Belongs to the universal ribosomal protein uL2 family.</text>
</comment>
<dbReference type="EMBL" id="CP001011">
    <property type="protein sequence ID" value="ACB91883.1"/>
    <property type="molecule type" value="Genomic_DNA"/>
</dbReference>
<dbReference type="RefSeq" id="WP_004090098.1">
    <property type="nucleotide sequence ID" value="NC_010577.1"/>
</dbReference>
<dbReference type="SMR" id="B2I8H2"/>
<dbReference type="KEGG" id="xfn:XfasM23_0436"/>
<dbReference type="HOGENOM" id="CLU_036235_2_1_6"/>
<dbReference type="Proteomes" id="UP000001698">
    <property type="component" value="Chromosome"/>
</dbReference>
<dbReference type="GO" id="GO:0015934">
    <property type="term" value="C:large ribosomal subunit"/>
    <property type="evidence" value="ECO:0007669"/>
    <property type="project" value="InterPro"/>
</dbReference>
<dbReference type="GO" id="GO:0019843">
    <property type="term" value="F:rRNA binding"/>
    <property type="evidence" value="ECO:0007669"/>
    <property type="project" value="UniProtKB-UniRule"/>
</dbReference>
<dbReference type="GO" id="GO:0003735">
    <property type="term" value="F:structural constituent of ribosome"/>
    <property type="evidence" value="ECO:0007669"/>
    <property type="project" value="InterPro"/>
</dbReference>
<dbReference type="GO" id="GO:0016740">
    <property type="term" value="F:transferase activity"/>
    <property type="evidence" value="ECO:0007669"/>
    <property type="project" value="InterPro"/>
</dbReference>
<dbReference type="GO" id="GO:0002181">
    <property type="term" value="P:cytoplasmic translation"/>
    <property type="evidence" value="ECO:0007669"/>
    <property type="project" value="TreeGrafter"/>
</dbReference>
<dbReference type="FunFam" id="2.30.30.30:FF:000001">
    <property type="entry name" value="50S ribosomal protein L2"/>
    <property type="match status" value="1"/>
</dbReference>
<dbReference type="FunFam" id="2.40.50.140:FF:000003">
    <property type="entry name" value="50S ribosomal protein L2"/>
    <property type="match status" value="1"/>
</dbReference>
<dbReference type="FunFam" id="4.10.950.10:FF:000001">
    <property type="entry name" value="50S ribosomal protein L2"/>
    <property type="match status" value="1"/>
</dbReference>
<dbReference type="Gene3D" id="2.30.30.30">
    <property type="match status" value="1"/>
</dbReference>
<dbReference type="Gene3D" id="2.40.50.140">
    <property type="entry name" value="Nucleic acid-binding proteins"/>
    <property type="match status" value="1"/>
</dbReference>
<dbReference type="Gene3D" id="4.10.950.10">
    <property type="entry name" value="Ribosomal protein L2, domain 3"/>
    <property type="match status" value="1"/>
</dbReference>
<dbReference type="HAMAP" id="MF_01320_B">
    <property type="entry name" value="Ribosomal_uL2_B"/>
    <property type="match status" value="1"/>
</dbReference>
<dbReference type="InterPro" id="IPR012340">
    <property type="entry name" value="NA-bd_OB-fold"/>
</dbReference>
<dbReference type="InterPro" id="IPR014722">
    <property type="entry name" value="Rib_uL2_dom2"/>
</dbReference>
<dbReference type="InterPro" id="IPR002171">
    <property type="entry name" value="Ribosomal_uL2"/>
</dbReference>
<dbReference type="InterPro" id="IPR005880">
    <property type="entry name" value="Ribosomal_uL2_bac/org-type"/>
</dbReference>
<dbReference type="InterPro" id="IPR022669">
    <property type="entry name" value="Ribosomal_uL2_C"/>
</dbReference>
<dbReference type="InterPro" id="IPR022671">
    <property type="entry name" value="Ribosomal_uL2_CS"/>
</dbReference>
<dbReference type="InterPro" id="IPR014726">
    <property type="entry name" value="Ribosomal_uL2_dom3"/>
</dbReference>
<dbReference type="InterPro" id="IPR022666">
    <property type="entry name" value="Ribosomal_uL2_RNA-bd_dom"/>
</dbReference>
<dbReference type="InterPro" id="IPR008991">
    <property type="entry name" value="Translation_prot_SH3-like_sf"/>
</dbReference>
<dbReference type="NCBIfam" id="TIGR01171">
    <property type="entry name" value="rplB_bact"/>
    <property type="match status" value="1"/>
</dbReference>
<dbReference type="PANTHER" id="PTHR13691:SF5">
    <property type="entry name" value="LARGE RIBOSOMAL SUBUNIT PROTEIN UL2M"/>
    <property type="match status" value="1"/>
</dbReference>
<dbReference type="PANTHER" id="PTHR13691">
    <property type="entry name" value="RIBOSOMAL PROTEIN L2"/>
    <property type="match status" value="1"/>
</dbReference>
<dbReference type="Pfam" id="PF00181">
    <property type="entry name" value="Ribosomal_L2"/>
    <property type="match status" value="1"/>
</dbReference>
<dbReference type="Pfam" id="PF03947">
    <property type="entry name" value="Ribosomal_L2_C"/>
    <property type="match status" value="1"/>
</dbReference>
<dbReference type="PIRSF" id="PIRSF002158">
    <property type="entry name" value="Ribosomal_L2"/>
    <property type="match status" value="1"/>
</dbReference>
<dbReference type="SMART" id="SM01383">
    <property type="entry name" value="Ribosomal_L2"/>
    <property type="match status" value="1"/>
</dbReference>
<dbReference type="SMART" id="SM01382">
    <property type="entry name" value="Ribosomal_L2_C"/>
    <property type="match status" value="1"/>
</dbReference>
<dbReference type="SUPFAM" id="SSF50249">
    <property type="entry name" value="Nucleic acid-binding proteins"/>
    <property type="match status" value="1"/>
</dbReference>
<dbReference type="SUPFAM" id="SSF50104">
    <property type="entry name" value="Translation proteins SH3-like domain"/>
    <property type="match status" value="1"/>
</dbReference>
<dbReference type="PROSITE" id="PS00467">
    <property type="entry name" value="RIBOSOMAL_L2"/>
    <property type="match status" value="1"/>
</dbReference>